<proteinExistence type="inferred from homology"/>
<name>RL14_CALS8</name>
<reference key="1">
    <citation type="submission" date="2007-04" db="EMBL/GenBank/DDBJ databases">
        <title>Genome sequence of the thermophilic hydrogen-producing bacterium Caldicellulosiruptor saccharolyticus DSM 8903.</title>
        <authorList>
            <person name="Copeland A."/>
            <person name="Lucas S."/>
            <person name="Lapidus A."/>
            <person name="Barry K."/>
            <person name="Detter J.C."/>
            <person name="Glavina del Rio T."/>
            <person name="Hammon N."/>
            <person name="Israni S."/>
            <person name="Dalin E."/>
            <person name="Tice H."/>
            <person name="Pitluck S."/>
            <person name="Kiss H."/>
            <person name="Brettin T."/>
            <person name="Bruce D."/>
            <person name="Han C."/>
            <person name="Schmutz J."/>
            <person name="Larimer F."/>
            <person name="Land M."/>
            <person name="Hauser L."/>
            <person name="Kyrpides N."/>
            <person name="Lykidis A."/>
            <person name="van de Werken H.J.G."/>
            <person name="Verhaart M.R.A."/>
            <person name="VanFossen A.L."/>
            <person name="Lewis D.L."/>
            <person name="Nichols J.D."/>
            <person name="Goorissen H.P."/>
            <person name="van Niel E.W.J."/>
            <person name="Stams F.J.M."/>
            <person name="Willquist K.U."/>
            <person name="Ward D.E."/>
            <person name="van der Oost J."/>
            <person name="Kelly R.M."/>
            <person name="Kengen S.M.W."/>
            <person name="Richardson P."/>
        </authorList>
    </citation>
    <scope>NUCLEOTIDE SEQUENCE [LARGE SCALE GENOMIC DNA]</scope>
    <source>
        <strain>ATCC 43494 / DSM 8903 / Tp8T 6331</strain>
    </source>
</reference>
<dbReference type="EMBL" id="CP000679">
    <property type="protein sequence ID" value="ABP67855.1"/>
    <property type="molecule type" value="Genomic_DNA"/>
</dbReference>
<dbReference type="RefSeq" id="WP_011917781.1">
    <property type="nucleotide sequence ID" value="NC_009437.1"/>
</dbReference>
<dbReference type="SMR" id="A4XLS0"/>
<dbReference type="STRING" id="351627.Csac_2277"/>
<dbReference type="KEGG" id="csc:Csac_2277"/>
<dbReference type="eggNOG" id="COG0093">
    <property type="taxonomic scope" value="Bacteria"/>
</dbReference>
<dbReference type="HOGENOM" id="CLU_095071_2_1_9"/>
<dbReference type="OrthoDB" id="9806379at2"/>
<dbReference type="Proteomes" id="UP000000256">
    <property type="component" value="Chromosome"/>
</dbReference>
<dbReference type="GO" id="GO:0022625">
    <property type="term" value="C:cytosolic large ribosomal subunit"/>
    <property type="evidence" value="ECO:0007669"/>
    <property type="project" value="TreeGrafter"/>
</dbReference>
<dbReference type="GO" id="GO:0070180">
    <property type="term" value="F:large ribosomal subunit rRNA binding"/>
    <property type="evidence" value="ECO:0007669"/>
    <property type="project" value="TreeGrafter"/>
</dbReference>
<dbReference type="GO" id="GO:0003735">
    <property type="term" value="F:structural constituent of ribosome"/>
    <property type="evidence" value="ECO:0007669"/>
    <property type="project" value="InterPro"/>
</dbReference>
<dbReference type="GO" id="GO:0006412">
    <property type="term" value="P:translation"/>
    <property type="evidence" value="ECO:0007669"/>
    <property type="project" value="UniProtKB-UniRule"/>
</dbReference>
<dbReference type="CDD" id="cd00337">
    <property type="entry name" value="Ribosomal_uL14"/>
    <property type="match status" value="1"/>
</dbReference>
<dbReference type="FunFam" id="2.40.150.20:FF:000001">
    <property type="entry name" value="50S ribosomal protein L14"/>
    <property type="match status" value="1"/>
</dbReference>
<dbReference type="Gene3D" id="2.40.150.20">
    <property type="entry name" value="Ribosomal protein L14"/>
    <property type="match status" value="1"/>
</dbReference>
<dbReference type="HAMAP" id="MF_01367">
    <property type="entry name" value="Ribosomal_uL14"/>
    <property type="match status" value="1"/>
</dbReference>
<dbReference type="InterPro" id="IPR000218">
    <property type="entry name" value="Ribosomal_uL14"/>
</dbReference>
<dbReference type="InterPro" id="IPR005745">
    <property type="entry name" value="Ribosomal_uL14_bac-type"/>
</dbReference>
<dbReference type="InterPro" id="IPR019972">
    <property type="entry name" value="Ribosomal_uL14_CS"/>
</dbReference>
<dbReference type="InterPro" id="IPR036853">
    <property type="entry name" value="Ribosomal_uL14_sf"/>
</dbReference>
<dbReference type="NCBIfam" id="TIGR01067">
    <property type="entry name" value="rplN_bact"/>
    <property type="match status" value="1"/>
</dbReference>
<dbReference type="PANTHER" id="PTHR11761">
    <property type="entry name" value="50S/60S RIBOSOMAL PROTEIN L14/L23"/>
    <property type="match status" value="1"/>
</dbReference>
<dbReference type="PANTHER" id="PTHR11761:SF3">
    <property type="entry name" value="LARGE RIBOSOMAL SUBUNIT PROTEIN UL14M"/>
    <property type="match status" value="1"/>
</dbReference>
<dbReference type="Pfam" id="PF00238">
    <property type="entry name" value="Ribosomal_L14"/>
    <property type="match status" value="1"/>
</dbReference>
<dbReference type="SMART" id="SM01374">
    <property type="entry name" value="Ribosomal_L14"/>
    <property type="match status" value="1"/>
</dbReference>
<dbReference type="SUPFAM" id="SSF50193">
    <property type="entry name" value="Ribosomal protein L14"/>
    <property type="match status" value="1"/>
</dbReference>
<dbReference type="PROSITE" id="PS00049">
    <property type="entry name" value="RIBOSOMAL_L14"/>
    <property type="match status" value="1"/>
</dbReference>
<sequence length="122" mass="13438">MIQPQSRLKVADNTGAKEVMCIRVLGGSNRKFANIGDIIVCSVKDATPGGVVKKGDVVKAVIVRTRKGIRREDGTYIRFDDNAAVLIREDKTPRGTRIFGPVARELRDKDFMKIVSLAPEVL</sequence>
<gene>
    <name evidence="1" type="primary">rplN</name>
    <name type="ordered locus">Csac_2277</name>
</gene>
<feature type="chain" id="PRO_1000055539" description="Large ribosomal subunit protein uL14">
    <location>
        <begin position="1"/>
        <end position="122"/>
    </location>
</feature>
<comment type="function">
    <text evidence="1">Binds to 23S rRNA. Forms part of two intersubunit bridges in the 70S ribosome.</text>
</comment>
<comment type="subunit">
    <text evidence="1">Part of the 50S ribosomal subunit. Forms a cluster with proteins L3 and L19. In the 70S ribosome, L14 and L19 interact and together make contacts with the 16S rRNA in bridges B5 and B8.</text>
</comment>
<comment type="similarity">
    <text evidence="1">Belongs to the universal ribosomal protein uL14 family.</text>
</comment>
<evidence type="ECO:0000255" key="1">
    <source>
        <dbReference type="HAMAP-Rule" id="MF_01367"/>
    </source>
</evidence>
<evidence type="ECO:0000305" key="2"/>
<accession>A4XLS0</accession>
<keyword id="KW-0687">Ribonucleoprotein</keyword>
<keyword id="KW-0689">Ribosomal protein</keyword>
<keyword id="KW-0694">RNA-binding</keyword>
<keyword id="KW-0699">rRNA-binding</keyword>
<organism>
    <name type="scientific">Caldicellulosiruptor saccharolyticus (strain ATCC 43494 / DSM 8903 / Tp8T 6331)</name>
    <dbReference type="NCBI Taxonomy" id="351627"/>
    <lineage>
        <taxon>Bacteria</taxon>
        <taxon>Bacillati</taxon>
        <taxon>Bacillota</taxon>
        <taxon>Bacillota incertae sedis</taxon>
        <taxon>Caldicellulosiruptorales</taxon>
        <taxon>Caldicellulosiruptoraceae</taxon>
        <taxon>Caldicellulosiruptor</taxon>
    </lineage>
</organism>
<protein>
    <recommendedName>
        <fullName evidence="1">Large ribosomal subunit protein uL14</fullName>
    </recommendedName>
    <alternativeName>
        <fullName evidence="2">50S ribosomal protein L14</fullName>
    </alternativeName>
</protein>